<dbReference type="EC" id="3.1.3.3"/>
<dbReference type="EMBL" id="M34995">
    <property type="protein sequence ID" value="AAA22714.1"/>
    <property type="molecule type" value="Genomic_DNA"/>
</dbReference>
<dbReference type="EMBL" id="AB001488">
    <property type="protein sequence ID" value="BAA19311.1"/>
    <property type="molecule type" value="Genomic_DNA"/>
</dbReference>
<dbReference type="EMBL" id="AL009126">
    <property type="protein sequence ID" value="CAB12281.1"/>
    <property type="molecule type" value="Genomic_DNA"/>
</dbReference>
<dbReference type="PIR" id="D36131">
    <property type="entry name" value="D36131"/>
</dbReference>
<dbReference type="RefSeq" id="NP_388355.1">
    <property type="nucleotide sequence ID" value="NC_000964.3"/>
</dbReference>
<dbReference type="RefSeq" id="WP_003246608.1">
    <property type="nucleotide sequence ID" value="NZ_OZ025638.1"/>
</dbReference>
<dbReference type="PDB" id="3W40">
    <property type="method" value="X-ray"/>
    <property type="resolution" value="1.30 A"/>
    <property type="chains" value="A/B=1-199"/>
</dbReference>
<dbReference type="PDB" id="3W41">
    <property type="method" value="X-ray"/>
    <property type="resolution" value="1.42 A"/>
    <property type="chains" value="A=1-199"/>
</dbReference>
<dbReference type="PDB" id="3W42">
    <property type="method" value="X-ray"/>
    <property type="resolution" value="1.06 A"/>
    <property type="chains" value="A/B=1-199"/>
</dbReference>
<dbReference type="PDB" id="3W43">
    <property type="method" value="X-ray"/>
    <property type="resolution" value="1.22 A"/>
    <property type="chains" value="A=1-199"/>
</dbReference>
<dbReference type="PDB" id="3W44">
    <property type="method" value="X-ray"/>
    <property type="resolution" value="2.30 A"/>
    <property type="chains" value="A/B=1-199"/>
</dbReference>
<dbReference type="PDB" id="3W45">
    <property type="method" value="X-ray"/>
    <property type="resolution" value="1.70 A"/>
    <property type="chains" value="A/B=1-199"/>
</dbReference>
<dbReference type="PDBsum" id="3W40"/>
<dbReference type="PDBsum" id="3W41"/>
<dbReference type="PDBsum" id="3W42"/>
<dbReference type="PDBsum" id="3W43"/>
<dbReference type="PDBsum" id="3W44"/>
<dbReference type="PDBsum" id="3W45"/>
<dbReference type="SMR" id="P17906"/>
<dbReference type="FunCoup" id="P17906">
    <property type="interactions" value="46"/>
</dbReference>
<dbReference type="STRING" id="224308.BSU04740"/>
<dbReference type="jPOST" id="P17906"/>
<dbReference type="PaxDb" id="224308-BSU04740"/>
<dbReference type="EnsemblBacteria" id="CAB12281">
    <property type="protein sequence ID" value="CAB12281"/>
    <property type="gene ID" value="BSU_04740"/>
</dbReference>
<dbReference type="GeneID" id="938155"/>
<dbReference type="KEGG" id="bsu:BSU04740"/>
<dbReference type="PATRIC" id="fig|224308.179.peg.502"/>
<dbReference type="eggNOG" id="COG2208">
    <property type="taxonomic scope" value="Bacteria"/>
</dbReference>
<dbReference type="InParanoid" id="P17906"/>
<dbReference type="OrthoDB" id="1090916at2"/>
<dbReference type="PhylomeDB" id="P17906"/>
<dbReference type="BioCyc" id="BSUB:BSU04740-MONOMER"/>
<dbReference type="BRENDA" id="3.1.3.3">
    <property type="organism ID" value="658"/>
</dbReference>
<dbReference type="EvolutionaryTrace" id="P17906"/>
<dbReference type="Proteomes" id="UP000001570">
    <property type="component" value="Chromosome"/>
</dbReference>
<dbReference type="GO" id="GO:0036424">
    <property type="term" value="F:L-phosphoserine phosphatase activity"/>
    <property type="evidence" value="ECO:0007669"/>
    <property type="project" value="RHEA"/>
</dbReference>
<dbReference type="GO" id="GO:0004721">
    <property type="term" value="F:phosphoprotein phosphatase activity"/>
    <property type="evidence" value="ECO:0007669"/>
    <property type="project" value="UniProtKB-KW"/>
</dbReference>
<dbReference type="GO" id="GO:0009408">
    <property type="term" value="P:response to heat"/>
    <property type="evidence" value="ECO:0000270"/>
    <property type="project" value="CACAO"/>
</dbReference>
<dbReference type="Gene3D" id="3.60.40.10">
    <property type="entry name" value="PPM-type phosphatase domain"/>
    <property type="match status" value="1"/>
</dbReference>
<dbReference type="InterPro" id="IPR036457">
    <property type="entry name" value="PPM-type-like_dom_sf"/>
</dbReference>
<dbReference type="InterPro" id="IPR001932">
    <property type="entry name" value="PPM-type_phosphatase-like_dom"/>
</dbReference>
<dbReference type="InterPro" id="IPR039248">
    <property type="entry name" value="Ptase_RsbX"/>
</dbReference>
<dbReference type="PANTHER" id="PTHR35801">
    <property type="entry name" value="PHOSPHOSERINE PHOSPHATASE RSBX"/>
    <property type="match status" value="1"/>
</dbReference>
<dbReference type="PANTHER" id="PTHR35801:SF1">
    <property type="entry name" value="PHOSPHOSERINE PHOSPHATASE RSBX"/>
    <property type="match status" value="1"/>
</dbReference>
<dbReference type="Pfam" id="PF07228">
    <property type="entry name" value="SpoIIE"/>
    <property type="match status" value="1"/>
</dbReference>
<dbReference type="SMART" id="SM00331">
    <property type="entry name" value="PP2C_SIG"/>
    <property type="match status" value="1"/>
</dbReference>
<dbReference type="SMART" id="SM00332">
    <property type="entry name" value="PP2Cc"/>
    <property type="match status" value="1"/>
</dbReference>
<dbReference type="SUPFAM" id="SSF81606">
    <property type="entry name" value="PP2C-like"/>
    <property type="match status" value="1"/>
</dbReference>
<dbReference type="PROSITE" id="PS51746">
    <property type="entry name" value="PPM_2"/>
    <property type="match status" value="1"/>
</dbReference>
<keyword id="KW-0002">3D-structure</keyword>
<keyword id="KW-0378">Hydrolase</keyword>
<keyword id="KW-0904">Protein phosphatase</keyword>
<keyword id="KW-1185">Reference proteome</keyword>
<gene>
    <name type="primary">rsbX</name>
    <name type="ordered locus">BSU04740</name>
</gene>
<proteinExistence type="evidence at protein level"/>
<name>RSBX_BACSU</name>
<accession>P17906</accession>
<comment type="function">
    <text evidence="2 3 4 5">Negative regulator of sigma-B activity. Dephosphorylates RsbS. Plays a role both in maintaining low sigma-B activity during growth and in reestablishing prestress sigma-B activity after induction. Could have a negative feedback role by indirectly communicating sigma-B protein levels.</text>
</comment>
<comment type="catalytic activity">
    <reaction>
        <text>O-phospho-L-serine + H2O = L-serine + phosphate</text>
        <dbReference type="Rhea" id="RHEA:21208"/>
        <dbReference type="ChEBI" id="CHEBI:15377"/>
        <dbReference type="ChEBI" id="CHEBI:33384"/>
        <dbReference type="ChEBI" id="CHEBI:43474"/>
        <dbReference type="ChEBI" id="CHEBI:57524"/>
        <dbReference type="EC" id="3.1.3.3"/>
    </reaction>
</comment>
<comment type="catalytic activity">
    <reaction>
        <text>O-phospho-D-serine + H2O = D-serine + phosphate</text>
        <dbReference type="Rhea" id="RHEA:24873"/>
        <dbReference type="ChEBI" id="CHEBI:15377"/>
        <dbReference type="ChEBI" id="CHEBI:35247"/>
        <dbReference type="ChEBI" id="CHEBI:43474"/>
        <dbReference type="ChEBI" id="CHEBI:58680"/>
        <dbReference type="EC" id="3.1.3.3"/>
    </reaction>
</comment>
<organism>
    <name type="scientific">Bacillus subtilis (strain 168)</name>
    <dbReference type="NCBI Taxonomy" id="224308"/>
    <lineage>
        <taxon>Bacteria</taxon>
        <taxon>Bacillati</taxon>
        <taxon>Bacillota</taxon>
        <taxon>Bacilli</taxon>
        <taxon>Bacillales</taxon>
        <taxon>Bacillaceae</taxon>
        <taxon>Bacillus</taxon>
    </lineage>
</organism>
<feature type="chain" id="PRO_0000057791" description="Phosphoserine phosphatase RsbX">
    <location>
        <begin position="1"/>
        <end position="199"/>
    </location>
</feature>
<feature type="domain" description="PPM-type phosphatase" evidence="1">
    <location>
        <begin position="11"/>
        <end position="198"/>
    </location>
</feature>
<feature type="strand" evidence="6">
    <location>
        <begin position="2"/>
        <end position="6"/>
    </location>
</feature>
<feature type="strand" evidence="6">
    <location>
        <begin position="8"/>
        <end position="17"/>
    </location>
</feature>
<feature type="strand" evidence="6">
    <location>
        <begin position="26"/>
        <end position="33"/>
    </location>
</feature>
<feature type="strand" evidence="6">
    <location>
        <begin position="35"/>
        <end position="48"/>
    </location>
</feature>
<feature type="helix" evidence="6">
    <location>
        <begin position="49"/>
        <end position="65"/>
    </location>
</feature>
<feature type="turn" evidence="6">
    <location>
        <begin position="66"/>
        <end position="68"/>
    </location>
</feature>
<feature type="helix" evidence="6">
    <location>
        <begin position="71"/>
        <end position="81"/>
    </location>
</feature>
<feature type="turn" evidence="6">
    <location>
        <begin position="82"/>
        <end position="84"/>
    </location>
</feature>
<feature type="strand" evidence="6">
    <location>
        <begin position="88"/>
        <end position="96"/>
    </location>
</feature>
<feature type="turn" evidence="6">
    <location>
        <begin position="97"/>
        <end position="100"/>
    </location>
</feature>
<feature type="strand" evidence="6">
    <location>
        <begin position="101"/>
        <end position="109"/>
    </location>
</feature>
<feature type="strand" evidence="6">
    <location>
        <begin position="111"/>
        <end position="115"/>
    </location>
</feature>
<feature type="strand" evidence="6">
    <location>
        <begin position="127"/>
        <end position="129"/>
    </location>
</feature>
<feature type="strand" evidence="6">
    <location>
        <begin position="140"/>
        <end position="144"/>
    </location>
</feature>
<feature type="strand" evidence="6">
    <location>
        <begin position="150"/>
        <end position="154"/>
    </location>
</feature>
<feature type="helix" evidence="6">
    <location>
        <begin position="163"/>
        <end position="169"/>
    </location>
</feature>
<feature type="helix" evidence="6">
    <location>
        <begin position="173"/>
        <end position="179"/>
    </location>
</feature>
<feature type="helix" evidence="6">
    <location>
        <begin position="180"/>
        <end position="183"/>
    </location>
</feature>
<feature type="strand" evidence="6">
    <location>
        <begin position="184"/>
        <end position="186"/>
    </location>
</feature>
<feature type="strand" evidence="6">
    <location>
        <begin position="191"/>
        <end position="198"/>
    </location>
</feature>
<sequence length="199" mass="22144">MIQVEENEHIQTLVYQLNKEGKSICGDSFFMKADDKELICAVADGLGSGSLANESSAAIKDLVENYASEDVESIIERCNQAMKNKRGATASILKINFEQRQFTYCSVGNVRFILHSPSGESFYPLPISGYLSGKPQKYKTHTATYEKGSKFIIHTDGLNVPDIRSHLKKGQSVEEISNSLKMYTTSRKDDLTYILGQLS</sequence>
<protein>
    <recommendedName>
        <fullName>Phosphoserine phosphatase RsbX</fullName>
        <ecNumber>3.1.3.3</ecNumber>
    </recommendedName>
    <alternativeName>
        <fullName>Sigma-B negative effector</fullName>
    </alternativeName>
</protein>
<evidence type="ECO:0000255" key="1">
    <source>
        <dbReference type="PROSITE-ProRule" id="PRU01082"/>
    </source>
</evidence>
<evidence type="ECO:0000269" key="2">
    <source>
    </source>
</evidence>
<evidence type="ECO:0000269" key="3">
    <source>
    </source>
</evidence>
<evidence type="ECO:0000269" key="4">
    <source>
    </source>
</evidence>
<evidence type="ECO:0000269" key="5">
    <source>
    </source>
</evidence>
<evidence type="ECO:0007829" key="6">
    <source>
        <dbReference type="PDB" id="3W42"/>
    </source>
</evidence>
<reference key="1">
    <citation type="journal article" date="1990" name="J. Bacteriol.">
        <title>Similar organization of the sigB and spoIIA operons encoding alternate sigma factors of Bacillus subtilis RNA polymerase.</title>
        <authorList>
            <person name="Kalman S."/>
            <person name="Duncan M.L."/>
            <person name="Thomas S.M."/>
            <person name="Price C.W."/>
        </authorList>
    </citation>
    <scope>NUCLEOTIDE SEQUENCE [GENOMIC DNA]</scope>
    <source>
        <strain>168</strain>
    </source>
</reference>
<reference key="2">
    <citation type="submission" date="1997-03" db="EMBL/GenBank/DDBJ databases">
        <title>A 148 kbp sequence of the region between 35 and 47 degree of the Bacillus subtilis genome.</title>
        <authorList>
            <person name="Kasahara Y."/>
            <person name="Nakai S."/>
            <person name="Lee S."/>
            <person name="Sadaie Y."/>
            <person name="Ogasawara N."/>
        </authorList>
    </citation>
    <scope>NUCLEOTIDE SEQUENCE [GENOMIC DNA]</scope>
    <source>
        <strain>168</strain>
    </source>
</reference>
<reference key="3">
    <citation type="journal article" date="1997" name="Nature">
        <title>The complete genome sequence of the Gram-positive bacterium Bacillus subtilis.</title>
        <authorList>
            <person name="Kunst F."/>
            <person name="Ogasawara N."/>
            <person name="Moszer I."/>
            <person name="Albertini A.M."/>
            <person name="Alloni G."/>
            <person name="Azevedo V."/>
            <person name="Bertero M.G."/>
            <person name="Bessieres P."/>
            <person name="Bolotin A."/>
            <person name="Borchert S."/>
            <person name="Borriss R."/>
            <person name="Boursier L."/>
            <person name="Brans A."/>
            <person name="Braun M."/>
            <person name="Brignell S.C."/>
            <person name="Bron S."/>
            <person name="Brouillet S."/>
            <person name="Bruschi C.V."/>
            <person name="Caldwell B."/>
            <person name="Capuano V."/>
            <person name="Carter N.M."/>
            <person name="Choi S.-K."/>
            <person name="Codani J.-J."/>
            <person name="Connerton I.F."/>
            <person name="Cummings N.J."/>
            <person name="Daniel R.A."/>
            <person name="Denizot F."/>
            <person name="Devine K.M."/>
            <person name="Duesterhoeft A."/>
            <person name="Ehrlich S.D."/>
            <person name="Emmerson P.T."/>
            <person name="Entian K.-D."/>
            <person name="Errington J."/>
            <person name="Fabret C."/>
            <person name="Ferrari E."/>
            <person name="Foulger D."/>
            <person name="Fritz C."/>
            <person name="Fujita M."/>
            <person name="Fujita Y."/>
            <person name="Fuma S."/>
            <person name="Galizzi A."/>
            <person name="Galleron N."/>
            <person name="Ghim S.-Y."/>
            <person name="Glaser P."/>
            <person name="Goffeau A."/>
            <person name="Golightly E.J."/>
            <person name="Grandi G."/>
            <person name="Guiseppi G."/>
            <person name="Guy B.J."/>
            <person name="Haga K."/>
            <person name="Haiech J."/>
            <person name="Harwood C.R."/>
            <person name="Henaut A."/>
            <person name="Hilbert H."/>
            <person name="Holsappel S."/>
            <person name="Hosono S."/>
            <person name="Hullo M.-F."/>
            <person name="Itaya M."/>
            <person name="Jones L.-M."/>
            <person name="Joris B."/>
            <person name="Karamata D."/>
            <person name="Kasahara Y."/>
            <person name="Klaerr-Blanchard M."/>
            <person name="Klein C."/>
            <person name="Kobayashi Y."/>
            <person name="Koetter P."/>
            <person name="Koningstein G."/>
            <person name="Krogh S."/>
            <person name="Kumano M."/>
            <person name="Kurita K."/>
            <person name="Lapidus A."/>
            <person name="Lardinois S."/>
            <person name="Lauber J."/>
            <person name="Lazarevic V."/>
            <person name="Lee S.-M."/>
            <person name="Levine A."/>
            <person name="Liu H."/>
            <person name="Masuda S."/>
            <person name="Mauel C."/>
            <person name="Medigue C."/>
            <person name="Medina N."/>
            <person name="Mellado R.P."/>
            <person name="Mizuno M."/>
            <person name="Moestl D."/>
            <person name="Nakai S."/>
            <person name="Noback M."/>
            <person name="Noone D."/>
            <person name="O'Reilly M."/>
            <person name="Ogawa K."/>
            <person name="Ogiwara A."/>
            <person name="Oudega B."/>
            <person name="Park S.-H."/>
            <person name="Parro V."/>
            <person name="Pohl T.M."/>
            <person name="Portetelle D."/>
            <person name="Porwollik S."/>
            <person name="Prescott A.M."/>
            <person name="Presecan E."/>
            <person name="Pujic P."/>
            <person name="Purnelle B."/>
            <person name="Rapoport G."/>
            <person name="Rey M."/>
            <person name="Reynolds S."/>
            <person name="Rieger M."/>
            <person name="Rivolta C."/>
            <person name="Rocha E."/>
            <person name="Roche B."/>
            <person name="Rose M."/>
            <person name="Sadaie Y."/>
            <person name="Sato T."/>
            <person name="Scanlan E."/>
            <person name="Schleich S."/>
            <person name="Schroeter R."/>
            <person name="Scoffone F."/>
            <person name="Sekiguchi J."/>
            <person name="Sekowska A."/>
            <person name="Seror S.J."/>
            <person name="Serror P."/>
            <person name="Shin B.-S."/>
            <person name="Soldo B."/>
            <person name="Sorokin A."/>
            <person name="Tacconi E."/>
            <person name="Takagi T."/>
            <person name="Takahashi H."/>
            <person name="Takemaru K."/>
            <person name="Takeuchi M."/>
            <person name="Tamakoshi A."/>
            <person name="Tanaka T."/>
            <person name="Terpstra P."/>
            <person name="Tognoni A."/>
            <person name="Tosato V."/>
            <person name="Uchiyama S."/>
            <person name="Vandenbol M."/>
            <person name="Vannier F."/>
            <person name="Vassarotti A."/>
            <person name="Viari A."/>
            <person name="Wambutt R."/>
            <person name="Wedler E."/>
            <person name="Wedler H."/>
            <person name="Weitzenegger T."/>
            <person name="Winters P."/>
            <person name="Wipat A."/>
            <person name="Yamamoto H."/>
            <person name="Yamane K."/>
            <person name="Yasumoto K."/>
            <person name="Yata K."/>
            <person name="Yoshida K."/>
            <person name="Yoshikawa H.-F."/>
            <person name="Zumstein E."/>
            <person name="Yoshikawa H."/>
            <person name="Danchin A."/>
        </authorList>
    </citation>
    <scope>NUCLEOTIDE SEQUENCE [LARGE SCALE GENOMIC DNA]</scope>
    <source>
        <strain>168</strain>
    </source>
</reference>
<reference key="4">
    <citation type="journal article" date="1987" name="J. Bacteriol.">
        <title>Gene encoding the 37,000-dalton minor sigma factor of Bacillus subtilis RNA polymerase: isolation, nucleotide sequence, chromosomal locus, and cryptic function.</title>
        <authorList>
            <person name="Duncan M.L."/>
            <person name="Kalman S.S."/>
            <person name="Thomas S.M."/>
            <person name="Price C.W."/>
        </authorList>
    </citation>
    <scope>NUCLEOTIDE SEQUENCE [GENOMIC DNA] OF 1-179</scope>
    <source>
        <strain>168</strain>
    </source>
</reference>
<reference key="5">
    <citation type="journal article" date="1992" name="J. Bacteriol.">
        <title>Activation of Bacillus subtilis transcription factor sigma B by a regulatory pathway responsive to stationary-phase signals.</title>
        <authorList>
            <person name="Boylan S.A."/>
            <person name="Rutherford A."/>
            <person name="Thomas S.M."/>
            <person name="Price C.W."/>
        </authorList>
    </citation>
    <scope>FUNCTION</scope>
    <source>
        <strain>168 / Marburg / ATCC 6051 / DSM 10 / JCM 1465 / NBRC 13719 / NCIMB 3610 / NRRL NRS-744 / VKM B-501</strain>
    </source>
</reference>
<reference key="6">
    <citation type="journal article" date="1993" name="J. Bacteriol.">
        <title>Regulation of sigma B levels and activity in Bacillus subtilis.</title>
        <authorList>
            <person name="Benson A.K."/>
            <person name="Haldenwang W.G."/>
        </authorList>
    </citation>
    <scope>FUNCTION</scope>
    <source>
        <strain>PY22</strain>
    </source>
</reference>
<reference key="7">
    <citation type="journal article" date="1996" name="Genes Dev.">
        <title>Opposing pairs of serine protein kinases and phosphatases transmit signals of environmental stress to activate a bacterial transcription factor.</title>
        <authorList>
            <person name="Yang X."/>
            <person name="Kang C.M."/>
            <person name="Brody M.S."/>
            <person name="Price C.W."/>
        </authorList>
    </citation>
    <scope>FUNCTION</scope>
    <source>
        <strain>168 / Marburg / ATCC 6051 / DSM 10 / JCM 1465 / NBRC 13719 / NCIMB 3610 / NRRL NRS-744 / VKM B-501</strain>
    </source>
</reference>
<reference key="8">
    <citation type="journal article" date="1998" name="J. Bacteriol.">
        <title>Isolation and characterization of Bacillus subtilis sigB operon mutations that suppress the loss of the negative regulator RsbX.</title>
        <authorList>
            <person name="Smirnova N."/>
            <person name="Scott J."/>
            <person name="Voelker U."/>
            <person name="Haldenwang W.G."/>
        </authorList>
    </citation>
    <scope>FUNCTION</scope>
    <source>
        <strain>PY22</strain>
    </source>
</reference>